<accession>P9WPS1</accession>
<accession>L0T6G8</accession>
<accession>P63691</accession>
<accession>Q10598</accession>
<dbReference type="EMBL" id="AL123456">
    <property type="protein sequence ID" value="CCP44062.1"/>
    <property type="molecule type" value="Genomic_DNA"/>
</dbReference>
<dbReference type="PIR" id="E70774">
    <property type="entry name" value="E70774"/>
</dbReference>
<dbReference type="RefSeq" id="NP_215821.1">
    <property type="nucleotide sequence ID" value="NC_000962.3"/>
</dbReference>
<dbReference type="RefSeq" id="WP_003406686.1">
    <property type="nucleotide sequence ID" value="NZ_NVQJ01000030.1"/>
</dbReference>
<dbReference type="PDB" id="8J0S">
    <property type="method" value="EM"/>
    <property type="resolution" value="2.58 A"/>
    <property type="chains" value="1/2/3/4/5/6/7/8/9=1-81"/>
</dbReference>
<dbReference type="PDB" id="8J0T">
    <property type="method" value="EM"/>
    <property type="resolution" value="2.80 A"/>
    <property type="chains" value="1/2/3/4/5/6/7/8/9=1-81"/>
</dbReference>
<dbReference type="PDB" id="8J57">
    <property type="method" value="EM"/>
    <property type="resolution" value="2.85 A"/>
    <property type="chains" value="1/2/3/4/5/6/7/8/9=1-81"/>
</dbReference>
<dbReference type="PDB" id="8J58">
    <property type="method" value="EM"/>
    <property type="resolution" value="3.15 A"/>
    <property type="chains" value="1/2/3/4/5/6/7/8/9=1-81"/>
</dbReference>
<dbReference type="PDB" id="8JR0">
    <property type="method" value="EM"/>
    <property type="resolution" value="2.80 A"/>
    <property type="chains" value="1/2/3/4/5/6/7/8/9=1-81"/>
</dbReference>
<dbReference type="PDB" id="8JR1">
    <property type="method" value="EM"/>
    <property type="resolution" value="3.17 A"/>
    <property type="chains" value="1/2/3/4/5/6/7/8/9=1-81"/>
</dbReference>
<dbReference type="PDBsum" id="8J0S"/>
<dbReference type="PDBsum" id="8J0T"/>
<dbReference type="PDBsum" id="8J57"/>
<dbReference type="PDBsum" id="8J58"/>
<dbReference type="PDBsum" id="8JR0"/>
<dbReference type="PDBsum" id="8JR1"/>
<dbReference type="SMR" id="P9WPS1"/>
<dbReference type="FunCoup" id="P9WPS1">
    <property type="interactions" value="104"/>
</dbReference>
<dbReference type="STRING" id="83332.Rv1305"/>
<dbReference type="BindingDB" id="P9WPS1"/>
<dbReference type="ChEMBL" id="CHEMBL2364166"/>
<dbReference type="DrugBank" id="DB08903">
    <property type="generic name" value="Bedaquiline"/>
</dbReference>
<dbReference type="DrugCentral" id="P9WPS1"/>
<dbReference type="PaxDb" id="83332-Rv1305"/>
<dbReference type="DNASU" id="886937"/>
<dbReference type="GeneID" id="886937"/>
<dbReference type="KEGG" id="mtu:Rv1305"/>
<dbReference type="KEGG" id="mtv:RVBD_1305"/>
<dbReference type="TubercuList" id="Rv1305"/>
<dbReference type="eggNOG" id="COG0636">
    <property type="taxonomic scope" value="Bacteria"/>
</dbReference>
<dbReference type="InParanoid" id="P9WPS1"/>
<dbReference type="OrthoDB" id="3578447at2"/>
<dbReference type="PRO" id="PR:P9WPS1"/>
<dbReference type="Proteomes" id="UP000001584">
    <property type="component" value="Chromosome"/>
</dbReference>
<dbReference type="GO" id="GO:0005886">
    <property type="term" value="C:plasma membrane"/>
    <property type="evidence" value="ECO:0007669"/>
    <property type="project" value="UniProtKB-SubCell"/>
</dbReference>
<dbReference type="GO" id="GO:0045259">
    <property type="term" value="C:proton-transporting ATP synthase complex"/>
    <property type="evidence" value="ECO:0000314"/>
    <property type="project" value="UniProtKB"/>
</dbReference>
<dbReference type="GO" id="GO:0033177">
    <property type="term" value="C:proton-transporting two-sector ATPase complex, proton-transporting domain"/>
    <property type="evidence" value="ECO:0007669"/>
    <property type="project" value="InterPro"/>
</dbReference>
<dbReference type="GO" id="GO:0008289">
    <property type="term" value="F:lipid binding"/>
    <property type="evidence" value="ECO:0007669"/>
    <property type="project" value="UniProtKB-KW"/>
</dbReference>
<dbReference type="GO" id="GO:0046933">
    <property type="term" value="F:proton-transporting ATP synthase activity, rotational mechanism"/>
    <property type="evidence" value="ECO:0007669"/>
    <property type="project" value="UniProtKB-UniRule"/>
</dbReference>
<dbReference type="GO" id="GO:0015986">
    <property type="term" value="P:proton motive force-driven ATP synthesis"/>
    <property type="evidence" value="ECO:0000314"/>
    <property type="project" value="MTBBASE"/>
</dbReference>
<dbReference type="GO" id="GO:1902600">
    <property type="term" value="P:proton transmembrane transport"/>
    <property type="evidence" value="ECO:0000314"/>
    <property type="project" value="MTBBASE"/>
</dbReference>
<dbReference type="CDD" id="cd18185">
    <property type="entry name" value="ATP-synt_Fo_c_ATPE"/>
    <property type="match status" value="1"/>
</dbReference>
<dbReference type="FunFam" id="1.20.20.10:FF:000010">
    <property type="entry name" value="ATP synthase subunit c"/>
    <property type="match status" value="1"/>
</dbReference>
<dbReference type="Gene3D" id="1.20.20.10">
    <property type="entry name" value="F1F0 ATP synthase subunit C"/>
    <property type="match status" value="1"/>
</dbReference>
<dbReference type="HAMAP" id="MF_01396">
    <property type="entry name" value="ATP_synth_c_bact"/>
    <property type="match status" value="1"/>
</dbReference>
<dbReference type="InterPro" id="IPR005953">
    <property type="entry name" value="ATP_synth_csu_bac/chlpt"/>
</dbReference>
<dbReference type="InterPro" id="IPR000454">
    <property type="entry name" value="ATP_synth_F0_csu"/>
</dbReference>
<dbReference type="InterPro" id="IPR020537">
    <property type="entry name" value="ATP_synth_F0_csu_DDCD_BS"/>
</dbReference>
<dbReference type="InterPro" id="IPR038662">
    <property type="entry name" value="ATP_synth_F0_csu_sf"/>
</dbReference>
<dbReference type="InterPro" id="IPR002379">
    <property type="entry name" value="ATPase_proteolipid_c-like_dom"/>
</dbReference>
<dbReference type="InterPro" id="IPR035921">
    <property type="entry name" value="F/V-ATP_Csub_sf"/>
</dbReference>
<dbReference type="NCBIfam" id="TIGR01260">
    <property type="entry name" value="ATP_synt_c"/>
    <property type="match status" value="1"/>
</dbReference>
<dbReference type="NCBIfam" id="NF004532">
    <property type="entry name" value="PRK05880.1"/>
    <property type="match status" value="1"/>
</dbReference>
<dbReference type="Pfam" id="PF00137">
    <property type="entry name" value="ATP-synt_C"/>
    <property type="match status" value="1"/>
</dbReference>
<dbReference type="PRINTS" id="PR00124">
    <property type="entry name" value="ATPASEC"/>
</dbReference>
<dbReference type="SUPFAM" id="SSF81333">
    <property type="entry name" value="F1F0 ATP synthase subunit C"/>
    <property type="match status" value="1"/>
</dbReference>
<dbReference type="PROSITE" id="PS00605">
    <property type="entry name" value="ATPASE_C"/>
    <property type="match status" value="1"/>
</dbReference>
<name>ATPL_MYCTU</name>
<proteinExistence type="evidence at protein level"/>
<keyword id="KW-0002">3D-structure</keyword>
<keyword id="KW-0066">ATP synthesis</keyword>
<keyword id="KW-1003">Cell membrane</keyword>
<keyword id="KW-0138">CF(0)</keyword>
<keyword id="KW-0375">Hydrogen ion transport</keyword>
<keyword id="KW-0406">Ion transport</keyword>
<keyword id="KW-0446">Lipid-binding</keyword>
<keyword id="KW-0472">Membrane</keyword>
<keyword id="KW-1185">Reference proteome</keyword>
<keyword id="KW-0812">Transmembrane</keyword>
<keyword id="KW-1133">Transmembrane helix</keyword>
<keyword id="KW-0813">Transport</keyword>
<gene>
    <name evidence="2" type="primary">atpE</name>
    <name type="ordered locus">Rv1305</name>
    <name type="ORF">MTCY373.25</name>
</gene>
<protein>
    <recommendedName>
        <fullName evidence="2">ATP synthase subunit c</fullName>
    </recommendedName>
    <alternativeName>
        <fullName evidence="2">ATP synthase F(0) sector subunit c</fullName>
    </alternativeName>
    <alternativeName>
        <fullName evidence="2">F-type ATPase subunit c</fullName>
        <shortName evidence="2">F-ATPase subunit c</shortName>
    </alternativeName>
    <alternativeName>
        <fullName evidence="2">Lipid-binding protein</fullName>
    </alternativeName>
</protein>
<comment type="function">
    <text evidence="2">F(1)F(0) ATP synthase produces ATP from ADP in the presence of a proton or sodium gradient. F-type ATPases consist of two structural domains, F(1) containing the extramembraneous catalytic core and F(0) containing the membrane proton channel, linked together by a central stalk and a peripheral stalk. During catalysis, ATP synthesis in the catalytic domain of F(1) is coupled via a rotary mechanism of the central stalk subunits to proton translocation.</text>
</comment>
<comment type="function">
    <text evidence="2">Key component of the F(0) channel; it plays a direct role in translocation across the membrane. A homomeric c-ring of between 10-14 subunits forms the central stalk rotor element with the F(1) delta and epsilon subunits.</text>
</comment>
<comment type="subunit">
    <text evidence="2">F-type ATPases have 2 components, F(1) - the catalytic core - and F(0) - the membrane proton channel. F(1) has five subunits: alpha(3), beta(3), gamma(1), delta(1), epsilon(1). F(0) has three main subunits: a(1), b(2) and c(10-14). The alpha and beta chains form an alternating ring which encloses part of the gamma chain. F(1) is attached to F(0) by a central stalk formed by the gamma and epsilon chains, while a peripheral stalk is formed by the delta and b chains.</text>
</comment>
<comment type="subcellular location">
    <subcellularLocation>
        <location evidence="2">Cell membrane</location>
        <topology evidence="2">Multi-pass membrane protein</topology>
    </subcellularLocation>
</comment>
<comment type="miscellaneous">
    <text evidence="1">Dicyclohexylcarbodiimide (DCDD) binding to the active glutamate residue inhibits ATPase in vitro.</text>
</comment>
<comment type="miscellaneous">
    <text>Was identified as a high-confidence drug target.</text>
</comment>
<comment type="similarity">
    <text evidence="2">Belongs to the ATPase C chain family.</text>
</comment>
<reference key="1">
    <citation type="journal article" date="1998" name="Nature">
        <title>Deciphering the biology of Mycobacterium tuberculosis from the complete genome sequence.</title>
        <authorList>
            <person name="Cole S.T."/>
            <person name="Brosch R."/>
            <person name="Parkhill J."/>
            <person name="Garnier T."/>
            <person name="Churcher C.M."/>
            <person name="Harris D.E."/>
            <person name="Gordon S.V."/>
            <person name="Eiglmeier K."/>
            <person name="Gas S."/>
            <person name="Barry C.E. III"/>
            <person name="Tekaia F."/>
            <person name="Badcock K."/>
            <person name="Basham D."/>
            <person name="Brown D."/>
            <person name="Chillingworth T."/>
            <person name="Connor R."/>
            <person name="Davies R.M."/>
            <person name="Devlin K."/>
            <person name="Feltwell T."/>
            <person name="Gentles S."/>
            <person name="Hamlin N."/>
            <person name="Holroyd S."/>
            <person name="Hornsby T."/>
            <person name="Jagels K."/>
            <person name="Krogh A."/>
            <person name="McLean J."/>
            <person name="Moule S."/>
            <person name="Murphy L.D."/>
            <person name="Oliver S."/>
            <person name="Osborne J."/>
            <person name="Quail M.A."/>
            <person name="Rajandream M.A."/>
            <person name="Rogers J."/>
            <person name="Rutter S."/>
            <person name="Seeger K."/>
            <person name="Skelton S."/>
            <person name="Squares S."/>
            <person name="Squares R."/>
            <person name="Sulston J.E."/>
            <person name="Taylor K."/>
            <person name="Whitehead S."/>
            <person name="Barrell B.G."/>
        </authorList>
    </citation>
    <scope>NUCLEOTIDE SEQUENCE [LARGE SCALE GENOMIC DNA]</scope>
    <source>
        <strain>ATCC 25618 / H37Rv</strain>
    </source>
</reference>
<reference key="2">
    <citation type="journal article" date="2008" name="BMC Syst. Biol.">
        <title>targetTB: a target identification pipeline for Mycobacterium tuberculosis through an interactome, reactome and genome-scale structural analysis.</title>
        <authorList>
            <person name="Raman K."/>
            <person name="Yeturu K."/>
            <person name="Chandra N."/>
        </authorList>
    </citation>
    <scope>IDENTIFICATION AS A DRUG TARGET [LARGE SCALE ANALYSIS]</scope>
</reference>
<feature type="chain" id="PRO_0000112155" description="ATP synthase subunit c">
    <location>
        <begin position="1"/>
        <end position="81"/>
    </location>
</feature>
<feature type="transmembrane region" description="Helical" evidence="2">
    <location>
        <begin position="5"/>
        <end position="25"/>
    </location>
</feature>
<feature type="transmembrane region" description="Helical" evidence="2">
    <location>
        <begin position="57"/>
        <end position="77"/>
    </location>
</feature>
<feature type="site" description="Reversibly protonated during proton transport" evidence="2">
    <location>
        <position position="61"/>
    </location>
</feature>
<sequence>MDPTIAAGALIGGGLIMAGGAIGAGIGDGVAGNALISGVARQPEAQGRLFTPFFITVGLVEAAYFINLAFMALFVFATPVK</sequence>
<organism>
    <name type="scientific">Mycobacterium tuberculosis (strain ATCC 25618 / H37Rv)</name>
    <dbReference type="NCBI Taxonomy" id="83332"/>
    <lineage>
        <taxon>Bacteria</taxon>
        <taxon>Bacillati</taxon>
        <taxon>Actinomycetota</taxon>
        <taxon>Actinomycetes</taxon>
        <taxon>Mycobacteriales</taxon>
        <taxon>Mycobacteriaceae</taxon>
        <taxon>Mycobacterium</taxon>
        <taxon>Mycobacterium tuberculosis complex</taxon>
    </lineage>
</organism>
<evidence type="ECO:0000250" key="1"/>
<evidence type="ECO:0000255" key="2">
    <source>
        <dbReference type="HAMAP-Rule" id="MF_01396"/>
    </source>
</evidence>